<sequence>MALRTLVSRRTLATGLGFRQQLRGLQTFSLPDLPYDYGALEPAISGDIMQLHHQNHHQTYVTNYNKALEQLHDAISKGDAPTVAKLHSAIKFNGGGHINHSIFWKNLAPVREGGGEPPKGSLGWAIDTNFGSLEALVQKMNAEGAALQGSGWVWLGVDKELKRLVIETTANQDPLVSKGANLVPLLGIDVWEHAYYLQYKNVRPDYLKNIWKVMNWKYANEVYEKECP</sequence>
<evidence type="ECO:0000250" key="1"/>
<evidence type="ECO:0000269" key="2">
    <source>
    </source>
</evidence>
<evidence type="ECO:0000305" key="3"/>
<organism>
    <name type="scientific">Nicotiana plumbaginifolia</name>
    <name type="common">Leadwort-leaved tobacco</name>
    <name type="synonym">Tex-Mex tobacco</name>
    <dbReference type="NCBI Taxonomy" id="4092"/>
    <lineage>
        <taxon>Eukaryota</taxon>
        <taxon>Viridiplantae</taxon>
        <taxon>Streptophyta</taxon>
        <taxon>Embryophyta</taxon>
        <taxon>Tracheophyta</taxon>
        <taxon>Spermatophyta</taxon>
        <taxon>Magnoliopsida</taxon>
        <taxon>eudicotyledons</taxon>
        <taxon>Gunneridae</taxon>
        <taxon>Pentapetalae</taxon>
        <taxon>asterids</taxon>
        <taxon>lamiids</taxon>
        <taxon>Solanales</taxon>
        <taxon>Solanaceae</taxon>
        <taxon>Nicotianoideae</taxon>
        <taxon>Nicotianeae</taxon>
        <taxon>Nicotiana</taxon>
    </lineage>
</organism>
<feature type="transit peptide" description="Mitochondrion" evidence="2">
    <location>
        <begin position="1"/>
        <end position="24"/>
    </location>
</feature>
<feature type="chain" id="PRO_0000032899" description="Superoxide dismutase [Mn], mitochondrial">
    <location>
        <begin position="25"/>
        <end position="228"/>
    </location>
</feature>
<feature type="binding site" evidence="1">
    <location>
        <position position="52"/>
    </location>
    <ligand>
        <name>Mn(2+)</name>
        <dbReference type="ChEBI" id="CHEBI:29035"/>
    </ligand>
</feature>
<feature type="binding site" evidence="1">
    <location>
        <position position="100"/>
    </location>
    <ligand>
        <name>Mn(2+)</name>
        <dbReference type="ChEBI" id="CHEBI:29035"/>
    </ligand>
</feature>
<feature type="binding site" evidence="1">
    <location>
        <position position="189"/>
    </location>
    <ligand>
        <name>Mn(2+)</name>
        <dbReference type="ChEBI" id="CHEBI:29035"/>
    </ligand>
</feature>
<feature type="binding site" evidence="1">
    <location>
        <position position="193"/>
    </location>
    <ligand>
        <name>Mn(2+)</name>
        <dbReference type="ChEBI" id="CHEBI:29035"/>
    </ligand>
</feature>
<dbReference type="EC" id="1.15.1.1"/>
<dbReference type="EMBL" id="X14482">
    <property type="protein sequence ID" value="CAA32643.1"/>
    <property type="molecule type" value="mRNA"/>
</dbReference>
<dbReference type="PIR" id="I28027">
    <property type="entry name" value="I28027"/>
</dbReference>
<dbReference type="PIR" id="S03639">
    <property type="entry name" value="S03639"/>
</dbReference>
<dbReference type="SMR" id="P11796"/>
<dbReference type="BRENDA" id="1.15.1.1">
    <property type="organism ID" value="3640"/>
</dbReference>
<dbReference type="GO" id="GO:0005759">
    <property type="term" value="C:mitochondrial matrix"/>
    <property type="evidence" value="ECO:0000314"/>
    <property type="project" value="UniProtKB"/>
</dbReference>
<dbReference type="GO" id="GO:0030145">
    <property type="term" value="F:manganese ion binding"/>
    <property type="evidence" value="ECO:0007669"/>
    <property type="project" value="TreeGrafter"/>
</dbReference>
<dbReference type="GO" id="GO:0004784">
    <property type="term" value="F:superoxide dismutase activity"/>
    <property type="evidence" value="ECO:0007669"/>
    <property type="project" value="UniProtKB-EC"/>
</dbReference>
<dbReference type="FunFam" id="1.10.287.990:FF:000001">
    <property type="entry name" value="Superoxide dismutase"/>
    <property type="match status" value="1"/>
</dbReference>
<dbReference type="FunFam" id="3.55.40.20:FF:000002">
    <property type="entry name" value="Superoxide dismutase"/>
    <property type="match status" value="1"/>
</dbReference>
<dbReference type="Gene3D" id="1.10.287.990">
    <property type="entry name" value="Fe,Mn superoxide dismutase (SOD) domain"/>
    <property type="match status" value="1"/>
</dbReference>
<dbReference type="Gene3D" id="3.55.40.20">
    <property type="entry name" value="Iron/manganese superoxide dismutase, C-terminal domain"/>
    <property type="match status" value="1"/>
</dbReference>
<dbReference type="InterPro" id="IPR050265">
    <property type="entry name" value="Fe/Mn_Superoxide_Dismutase"/>
</dbReference>
<dbReference type="InterPro" id="IPR001189">
    <property type="entry name" value="Mn/Fe_SOD"/>
</dbReference>
<dbReference type="InterPro" id="IPR019833">
    <property type="entry name" value="Mn/Fe_SOD_BS"/>
</dbReference>
<dbReference type="InterPro" id="IPR019832">
    <property type="entry name" value="Mn/Fe_SOD_C"/>
</dbReference>
<dbReference type="InterPro" id="IPR019831">
    <property type="entry name" value="Mn/Fe_SOD_N"/>
</dbReference>
<dbReference type="InterPro" id="IPR036324">
    <property type="entry name" value="Mn/Fe_SOD_N_sf"/>
</dbReference>
<dbReference type="InterPro" id="IPR036314">
    <property type="entry name" value="SOD_C_sf"/>
</dbReference>
<dbReference type="PANTHER" id="PTHR11404:SF44">
    <property type="entry name" value="SUPEROXIDE DISMUTASE"/>
    <property type="match status" value="1"/>
</dbReference>
<dbReference type="PANTHER" id="PTHR11404">
    <property type="entry name" value="SUPEROXIDE DISMUTASE 2"/>
    <property type="match status" value="1"/>
</dbReference>
<dbReference type="Pfam" id="PF02777">
    <property type="entry name" value="Sod_Fe_C"/>
    <property type="match status" value="1"/>
</dbReference>
<dbReference type="Pfam" id="PF00081">
    <property type="entry name" value="Sod_Fe_N"/>
    <property type="match status" value="1"/>
</dbReference>
<dbReference type="PIRSF" id="PIRSF000349">
    <property type="entry name" value="SODismutase"/>
    <property type="match status" value="1"/>
</dbReference>
<dbReference type="PRINTS" id="PR01703">
    <property type="entry name" value="MNSODISMTASE"/>
</dbReference>
<dbReference type="SUPFAM" id="SSF54719">
    <property type="entry name" value="Fe,Mn superoxide dismutase (SOD), C-terminal domain"/>
    <property type="match status" value="1"/>
</dbReference>
<dbReference type="SUPFAM" id="SSF46609">
    <property type="entry name" value="Fe,Mn superoxide dismutase (SOD), N-terminal domain"/>
    <property type="match status" value="1"/>
</dbReference>
<dbReference type="PROSITE" id="PS00088">
    <property type="entry name" value="SOD_MN"/>
    <property type="match status" value="1"/>
</dbReference>
<reference key="1">
    <citation type="journal article" date="1989" name="EMBO J.">
        <title>The induction of manganese superoxide dismutase in response to stress in Nicotiana plumbaginifolia.</title>
        <authorList>
            <person name="Bowler C."/>
            <person name="Alliotte T."/>
            <person name="de Loose M."/>
            <person name="van Montagu M."/>
            <person name="Inze D."/>
        </authorList>
    </citation>
    <scope>NUCLEOTIDE SEQUENCE [MRNA]</scope>
    <source>
        <strain>cv. P2</strain>
    </source>
</reference>
<reference key="2">
    <citation type="journal article" date="1987" name="Proc. Natl. Acad. Sci. U.S.A.">
        <title>Alterations in the phenotype of plant cells studied by NH2-terminal amino acid-sequence analysis of proteins electroblotted from two-dimensional gel-separated total extracts.</title>
        <authorList>
            <person name="Bauw G."/>
            <person name="de Loose M."/>
            <person name="Inze D."/>
            <person name="van Montagu M."/>
            <person name="Vandekerckhove J."/>
        </authorList>
    </citation>
    <scope>PROTEIN SEQUENCE OF 25-47</scope>
</reference>
<proteinExistence type="evidence at protein level"/>
<comment type="function">
    <text>Destroys superoxide anion radicals which are normally produced within the cells and which are toxic to biological systems.</text>
</comment>
<comment type="catalytic activity">
    <reaction>
        <text>2 superoxide + 2 H(+) = H2O2 + O2</text>
        <dbReference type="Rhea" id="RHEA:20696"/>
        <dbReference type="ChEBI" id="CHEBI:15378"/>
        <dbReference type="ChEBI" id="CHEBI:15379"/>
        <dbReference type="ChEBI" id="CHEBI:16240"/>
        <dbReference type="ChEBI" id="CHEBI:18421"/>
        <dbReference type="EC" id="1.15.1.1"/>
    </reaction>
</comment>
<comment type="cofactor">
    <cofactor evidence="1">
        <name>Mn(2+)</name>
        <dbReference type="ChEBI" id="CHEBI:29035"/>
    </cofactor>
    <text evidence="1">Binds 1 Mn(2+) ion per subunit.</text>
</comment>
<comment type="subunit">
    <text>Homotetramer.</text>
</comment>
<comment type="subcellular location">
    <subcellularLocation>
        <location>Mitochondrion matrix</location>
    </subcellularLocation>
</comment>
<comment type="similarity">
    <text evidence="3">Belongs to the iron/manganese superoxide dismutase family.</text>
</comment>
<accession>P11796</accession>
<gene>
    <name type="primary">SODA</name>
</gene>
<protein>
    <recommendedName>
        <fullName>Superoxide dismutase [Mn], mitochondrial</fullName>
        <ecNumber>1.15.1.1</ecNumber>
    </recommendedName>
</protein>
<name>SODM_NICPL</name>
<keyword id="KW-0903">Direct protein sequencing</keyword>
<keyword id="KW-0464">Manganese</keyword>
<keyword id="KW-0479">Metal-binding</keyword>
<keyword id="KW-0496">Mitochondrion</keyword>
<keyword id="KW-0560">Oxidoreductase</keyword>
<keyword id="KW-0809">Transit peptide</keyword>